<comment type="function">
    <text evidence="1">Nucleotidyltransferase involved in the post-translational modification of proteins. It can catalyze the addition of adenosine monophosphate (AMP) or uridine monophosphate (UMP) to a protein, resulting in modifications known as AMPylation and UMPylation.</text>
</comment>
<comment type="catalytic activity">
    <reaction evidence="1">
        <text>L-seryl-[protein] + ATP = 3-O-(5'-adenylyl)-L-seryl-[protein] + diphosphate</text>
        <dbReference type="Rhea" id="RHEA:58120"/>
        <dbReference type="Rhea" id="RHEA-COMP:9863"/>
        <dbReference type="Rhea" id="RHEA-COMP:15073"/>
        <dbReference type="ChEBI" id="CHEBI:29999"/>
        <dbReference type="ChEBI" id="CHEBI:30616"/>
        <dbReference type="ChEBI" id="CHEBI:33019"/>
        <dbReference type="ChEBI" id="CHEBI:142516"/>
        <dbReference type="EC" id="2.7.7.108"/>
    </reaction>
</comment>
<comment type="catalytic activity">
    <reaction evidence="1">
        <text>L-threonyl-[protein] + ATP = 3-O-(5'-adenylyl)-L-threonyl-[protein] + diphosphate</text>
        <dbReference type="Rhea" id="RHEA:54292"/>
        <dbReference type="Rhea" id="RHEA-COMP:11060"/>
        <dbReference type="Rhea" id="RHEA-COMP:13847"/>
        <dbReference type="ChEBI" id="CHEBI:30013"/>
        <dbReference type="ChEBI" id="CHEBI:30616"/>
        <dbReference type="ChEBI" id="CHEBI:33019"/>
        <dbReference type="ChEBI" id="CHEBI:138113"/>
        <dbReference type="EC" id="2.7.7.108"/>
    </reaction>
</comment>
<comment type="catalytic activity">
    <reaction evidence="1">
        <text>L-tyrosyl-[protein] + ATP = O-(5'-adenylyl)-L-tyrosyl-[protein] + diphosphate</text>
        <dbReference type="Rhea" id="RHEA:54288"/>
        <dbReference type="Rhea" id="RHEA-COMP:10136"/>
        <dbReference type="Rhea" id="RHEA-COMP:13846"/>
        <dbReference type="ChEBI" id="CHEBI:30616"/>
        <dbReference type="ChEBI" id="CHEBI:33019"/>
        <dbReference type="ChEBI" id="CHEBI:46858"/>
        <dbReference type="ChEBI" id="CHEBI:83624"/>
        <dbReference type="EC" id="2.7.7.108"/>
    </reaction>
</comment>
<comment type="catalytic activity">
    <reaction evidence="1">
        <text>L-histidyl-[protein] + UTP = N(tele)-(5'-uridylyl)-L-histidyl-[protein] + diphosphate</text>
        <dbReference type="Rhea" id="RHEA:83891"/>
        <dbReference type="Rhea" id="RHEA-COMP:9745"/>
        <dbReference type="Rhea" id="RHEA-COMP:20239"/>
        <dbReference type="ChEBI" id="CHEBI:29979"/>
        <dbReference type="ChEBI" id="CHEBI:33019"/>
        <dbReference type="ChEBI" id="CHEBI:46398"/>
        <dbReference type="ChEBI" id="CHEBI:233474"/>
    </reaction>
</comment>
<comment type="catalytic activity">
    <reaction evidence="1">
        <text>L-seryl-[protein] + UTP = O-(5'-uridylyl)-L-seryl-[protein] + diphosphate</text>
        <dbReference type="Rhea" id="RHEA:64604"/>
        <dbReference type="Rhea" id="RHEA-COMP:9863"/>
        <dbReference type="Rhea" id="RHEA-COMP:16635"/>
        <dbReference type="ChEBI" id="CHEBI:29999"/>
        <dbReference type="ChEBI" id="CHEBI:33019"/>
        <dbReference type="ChEBI" id="CHEBI:46398"/>
        <dbReference type="ChEBI" id="CHEBI:156051"/>
    </reaction>
</comment>
<comment type="catalytic activity">
    <reaction evidence="1">
        <text>L-tyrosyl-[protein] + UTP = O-(5'-uridylyl)-L-tyrosyl-[protein] + diphosphate</text>
        <dbReference type="Rhea" id="RHEA:83887"/>
        <dbReference type="Rhea" id="RHEA-COMP:10136"/>
        <dbReference type="Rhea" id="RHEA-COMP:20238"/>
        <dbReference type="ChEBI" id="CHEBI:33019"/>
        <dbReference type="ChEBI" id="CHEBI:46398"/>
        <dbReference type="ChEBI" id="CHEBI:46858"/>
        <dbReference type="ChEBI" id="CHEBI:90602"/>
    </reaction>
</comment>
<comment type="cofactor">
    <cofactor evidence="1">
        <name>Mg(2+)</name>
        <dbReference type="ChEBI" id="CHEBI:18420"/>
    </cofactor>
    <cofactor evidence="1">
        <name>Mn(2+)</name>
        <dbReference type="ChEBI" id="CHEBI:29035"/>
    </cofactor>
</comment>
<comment type="similarity">
    <text evidence="1">Belongs to the SELO family.</text>
</comment>
<comment type="sequence caution" evidence="2">
    <conflict type="erroneous initiation">
        <sequence resource="EMBL-CDS" id="AAU47655"/>
    </conflict>
</comment>
<name>SELO_BURMA</name>
<organism>
    <name type="scientific">Burkholderia mallei (strain ATCC 23344)</name>
    <dbReference type="NCBI Taxonomy" id="243160"/>
    <lineage>
        <taxon>Bacteria</taxon>
        <taxon>Pseudomonadati</taxon>
        <taxon>Pseudomonadota</taxon>
        <taxon>Betaproteobacteria</taxon>
        <taxon>Burkholderiales</taxon>
        <taxon>Burkholderiaceae</taxon>
        <taxon>Burkholderia</taxon>
        <taxon>pseudomallei group</taxon>
    </lineage>
</organism>
<evidence type="ECO:0000255" key="1">
    <source>
        <dbReference type="HAMAP-Rule" id="MF_00692"/>
    </source>
</evidence>
<evidence type="ECO:0000305" key="2"/>
<accession>Q62JM7</accession>
<reference key="1">
    <citation type="journal article" date="2004" name="Proc. Natl. Acad. Sci. U.S.A.">
        <title>Structural flexibility in the Burkholderia mallei genome.</title>
        <authorList>
            <person name="Nierman W.C."/>
            <person name="DeShazer D."/>
            <person name="Kim H.S."/>
            <person name="Tettelin H."/>
            <person name="Nelson K.E."/>
            <person name="Feldblyum T.V."/>
            <person name="Ulrich R.L."/>
            <person name="Ronning C.M."/>
            <person name="Brinkac L.M."/>
            <person name="Daugherty S.C."/>
            <person name="Davidsen T.D."/>
            <person name="DeBoy R.T."/>
            <person name="Dimitrov G."/>
            <person name="Dodson R.J."/>
            <person name="Durkin A.S."/>
            <person name="Gwinn M.L."/>
            <person name="Haft D.H."/>
            <person name="Khouri H.M."/>
            <person name="Kolonay J.F."/>
            <person name="Madupu R."/>
            <person name="Mohammoud Y."/>
            <person name="Nelson W.C."/>
            <person name="Radune D."/>
            <person name="Romero C.M."/>
            <person name="Sarria S."/>
            <person name="Selengut J."/>
            <person name="Shamblin C."/>
            <person name="Sullivan S.A."/>
            <person name="White O."/>
            <person name="Yu Y."/>
            <person name="Zafar N."/>
            <person name="Zhou L."/>
            <person name="Fraser C.M."/>
        </authorList>
    </citation>
    <scope>NUCLEOTIDE SEQUENCE [LARGE SCALE GENOMIC DNA]</scope>
    <source>
        <strain>ATCC 23344</strain>
    </source>
</reference>
<protein>
    <recommendedName>
        <fullName evidence="1">Protein nucleotidyltransferase YdiU</fullName>
        <ecNumber evidence="1">2.7.7.-</ecNumber>
    </recommendedName>
    <alternativeName>
        <fullName evidence="1">Protein adenylyltransferase YdiU</fullName>
        <ecNumber evidence="1">2.7.7.108</ecNumber>
    </alternativeName>
    <alternativeName>
        <fullName evidence="1">Protein uridylyltransferase YdiU</fullName>
        <ecNumber evidence="1">2.7.7.-</ecNumber>
    </alternativeName>
</protein>
<dbReference type="EC" id="2.7.7.-" evidence="1"/>
<dbReference type="EC" id="2.7.7.108" evidence="1"/>
<dbReference type="EMBL" id="CP000010">
    <property type="protein sequence ID" value="AAU47655.1"/>
    <property type="status" value="ALT_INIT"/>
    <property type="molecule type" value="Genomic_DNA"/>
</dbReference>
<dbReference type="RefSeq" id="WP_004199502.1">
    <property type="nucleotide sequence ID" value="NC_006348.1"/>
</dbReference>
<dbReference type="RefSeq" id="YP_103092.1">
    <property type="nucleotide sequence ID" value="NC_006348.1"/>
</dbReference>
<dbReference type="SMR" id="Q62JM7"/>
<dbReference type="GeneID" id="92979174"/>
<dbReference type="KEGG" id="bma:BMA1440"/>
<dbReference type="PATRIC" id="fig|243160.12.peg.1481"/>
<dbReference type="eggNOG" id="COG0397">
    <property type="taxonomic scope" value="Bacteria"/>
</dbReference>
<dbReference type="HOGENOM" id="CLU_010245_4_0_4"/>
<dbReference type="Proteomes" id="UP000006693">
    <property type="component" value="Chromosome 1"/>
</dbReference>
<dbReference type="GO" id="GO:0070733">
    <property type="term" value="F:AMPylase activity"/>
    <property type="evidence" value="ECO:0007669"/>
    <property type="project" value="RHEA"/>
</dbReference>
<dbReference type="GO" id="GO:0005524">
    <property type="term" value="F:ATP binding"/>
    <property type="evidence" value="ECO:0007669"/>
    <property type="project" value="UniProtKB-UniRule"/>
</dbReference>
<dbReference type="GO" id="GO:0000287">
    <property type="term" value="F:magnesium ion binding"/>
    <property type="evidence" value="ECO:0007669"/>
    <property type="project" value="UniProtKB-UniRule"/>
</dbReference>
<dbReference type="HAMAP" id="MF_00692">
    <property type="entry name" value="YdiU_SelO"/>
    <property type="match status" value="1"/>
</dbReference>
<dbReference type="InterPro" id="IPR003846">
    <property type="entry name" value="SelO"/>
</dbReference>
<dbReference type="NCBIfam" id="NF000658">
    <property type="entry name" value="PRK00029.1"/>
    <property type="match status" value="1"/>
</dbReference>
<dbReference type="PANTHER" id="PTHR32057">
    <property type="entry name" value="PROTEIN ADENYLYLTRANSFERASE SELO, MITOCHONDRIAL"/>
    <property type="match status" value="1"/>
</dbReference>
<dbReference type="PANTHER" id="PTHR32057:SF14">
    <property type="entry name" value="PROTEIN ADENYLYLTRANSFERASE SELO, MITOCHONDRIAL"/>
    <property type="match status" value="1"/>
</dbReference>
<dbReference type="Pfam" id="PF02696">
    <property type="entry name" value="SelO"/>
    <property type="match status" value="1"/>
</dbReference>
<feature type="chain" id="PRO_0000271812" description="Protein nucleotidyltransferase YdiU">
    <location>
        <begin position="1"/>
        <end position="521"/>
    </location>
</feature>
<feature type="active site" description="Proton acceptor" evidence="1">
    <location>
        <position position="270"/>
    </location>
</feature>
<feature type="binding site" evidence="1">
    <location>
        <position position="109"/>
    </location>
    <ligand>
        <name>ATP</name>
        <dbReference type="ChEBI" id="CHEBI:30616"/>
    </ligand>
</feature>
<feature type="binding site" evidence="1">
    <location>
        <position position="111"/>
    </location>
    <ligand>
        <name>ATP</name>
        <dbReference type="ChEBI" id="CHEBI:30616"/>
    </ligand>
</feature>
<feature type="binding site" evidence="1">
    <location>
        <position position="112"/>
    </location>
    <ligand>
        <name>ATP</name>
        <dbReference type="ChEBI" id="CHEBI:30616"/>
    </ligand>
</feature>
<feature type="binding site" evidence="1">
    <location>
        <position position="131"/>
    </location>
    <ligand>
        <name>ATP</name>
        <dbReference type="ChEBI" id="CHEBI:30616"/>
    </ligand>
</feature>
<feature type="binding site" evidence="1">
    <location>
        <position position="143"/>
    </location>
    <ligand>
        <name>ATP</name>
        <dbReference type="ChEBI" id="CHEBI:30616"/>
    </ligand>
</feature>
<feature type="binding site" evidence="1">
    <location>
        <position position="144"/>
    </location>
    <ligand>
        <name>ATP</name>
        <dbReference type="ChEBI" id="CHEBI:30616"/>
    </ligand>
</feature>
<feature type="binding site" evidence="1">
    <location>
        <position position="194"/>
    </location>
    <ligand>
        <name>ATP</name>
        <dbReference type="ChEBI" id="CHEBI:30616"/>
    </ligand>
</feature>
<feature type="binding site" evidence="1">
    <location>
        <position position="201"/>
    </location>
    <ligand>
        <name>ATP</name>
        <dbReference type="ChEBI" id="CHEBI:30616"/>
    </ligand>
</feature>
<feature type="binding site" evidence="1">
    <location>
        <position position="271"/>
    </location>
    <ligand>
        <name>Mg(2+)</name>
        <dbReference type="ChEBI" id="CHEBI:18420"/>
    </ligand>
</feature>
<feature type="binding site" evidence="1">
    <location>
        <position position="280"/>
    </location>
    <ligand>
        <name>ATP</name>
        <dbReference type="ChEBI" id="CHEBI:30616"/>
    </ligand>
</feature>
<feature type="binding site" evidence="1">
    <location>
        <position position="280"/>
    </location>
    <ligand>
        <name>Mg(2+)</name>
        <dbReference type="ChEBI" id="CHEBI:18420"/>
    </ligand>
</feature>
<sequence length="521" mass="57658">MSFSRSEAAPAAPLPDLAATLAALRDDAFQQLGAAFVTRLPAAPLPAPYVVGFSDDAARMLGLEPALRDAPGFAELFCGNPTRDWPQASLPYASVYSGHQFGVWAGQLGDGRALTIGELAHDGRRYELQLKGAGRTPYSRMGDGRAVLRSSIREFLCSEAMHHLGIPTTRALAVIGSDQPVVREEIETSAVVTRVAQSFVRFGHFEHFFANDRPEQLRALADHVIERFYPACRDADDPYLALLAEATRRTAELVAQWQAVGFCHGVMNTDNMSILGLTIDYGPFGFIDAFDAKHVCNHSDTQGRYAYRMQPRIAHWNCFCLAQALLPLIGLHRDAPSEDARAERAVEDAHAVLGRFPEQFGPALERAIRAKLGLALEREGDAALANQLLEIMDASHADFTLTFRHLARVSKHDARGDAPVRDLFIDRDAFDRWANLYRARLSEEARDDASRAAAMNRVNPKYVLRNHLAETAIRRAKEKDFSEVERLAAVLRRPFDEQPEHDAYAALPPDWASTLEVSCSS</sequence>
<proteinExistence type="inferred from homology"/>
<gene>
    <name evidence="1" type="primary">ydiU</name>
    <name evidence="1" type="synonym">selO</name>
    <name type="ordered locus">BMA1440</name>
</gene>
<keyword id="KW-0067">ATP-binding</keyword>
<keyword id="KW-0460">Magnesium</keyword>
<keyword id="KW-0464">Manganese</keyword>
<keyword id="KW-0479">Metal-binding</keyword>
<keyword id="KW-0547">Nucleotide-binding</keyword>
<keyword id="KW-0548">Nucleotidyltransferase</keyword>
<keyword id="KW-1185">Reference proteome</keyword>
<keyword id="KW-0808">Transferase</keyword>